<evidence type="ECO:0000255" key="1"/>
<evidence type="ECO:0000255" key="2">
    <source>
        <dbReference type="HAMAP-Rule" id="MF_00684"/>
    </source>
</evidence>
<dbReference type="EC" id="3.5.1.135" evidence="2"/>
<dbReference type="EMBL" id="FM200053">
    <property type="protein sequence ID" value="CAR60961.1"/>
    <property type="molecule type" value="Genomic_DNA"/>
</dbReference>
<dbReference type="RefSeq" id="WP_001182976.1">
    <property type="nucleotide sequence ID" value="NC_011147.1"/>
</dbReference>
<dbReference type="SMR" id="B5BFL5"/>
<dbReference type="KEGG" id="sek:SSPA2720"/>
<dbReference type="HOGENOM" id="CLU_152586_0_0_6"/>
<dbReference type="Proteomes" id="UP000001869">
    <property type="component" value="Chromosome"/>
</dbReference>
<dbReference type="GO" id="GO:0005829">
    <property type="term" value="C:cytosol"/>
    <property type="evidence" value="ECO:0007669"/>
    <property type="project" value="TreeGrafter"/>
</dbReference>
<dbReference type="GO" id="GO:0016813">
    <property type="term" value="F:hydrolase activity, acting on carbon-nitrogen (but not peptide) bonds, in linear amidines"/>
    <property type="evidence" value="ECO:0007669"/>
    <property type="project" value="UniProtKB-UniRule"/>
</dbReference>
<dbReference type="GO" id="GO:0106251">
    <property type="term" value="F:N4-acetylcytidine amidohydrolase activity"/>
    <property type="evidence" value="ECO:0007669"/>
    <property type="project" value="RHEA"/>
</dbReference>
<dbReference type="CDD" id="cd06552">
    <property type="entry name" value="ASCH_yqfb_like"/>
    <property type="match status" value="1"/>
</dbReference>
<dbReference type="FunFam" id="2.30.130.30:FF:000001">
    <property type="entry name" value="UPF0267 protein YqfB"/>
    <property type="match status" value="1"/>
</dbReference>
<dbReference type="Gene3D" id="2.30.130.30">
    <property type="entry name" value="Hypothetical protein"/>
    <property type="match status" value="1"/>
</dbReference>
<dbReference type="HAMAP" id="MF_00684">
    <property type="entry name" value="ac4C_amidohydr"/>
    <property type="match status" value="1"/>
</dbReference>
<dbReference type="InterPro" id="IPR008314">
    <property type="entry name" value="AC4CH"/>
</dbReference>
<dbReference type="InterPro" id="IPR007374">
    <property type="entry name" value="ASCH_domain"/>
</dbReference>
<dbReference type="InterPro" id="IPR015947">
    <property type="entry name" value="PUA-like_sf"/>
</dbReference>
<dbReference type="NCBIfam" id="NF003443">
    <property type="entry name" value="PRK04980.1"/>
    <property type="match status" value="1"/>
</dbReference>
<dbReference type="PANTHER" id="PTHR38088">
    <property type="entry name" value="UCP029143 FAMILY PROTEIN"/>
    <property type="match status" value="1"/>
</dbReference>
<dbReference type="PANTHER" id="PTHR38088:SF2">
    <property type="entry name" value="UCP029143 FAMILY PROTEIN"/>
    <property type="match status" value="1"/>
</dbReference>
<dbReference type="Pfam" id="PF04266">
    <property type="entry name" value="ASCH"/>
    <property type="match status" value="1"/>
</dbReference>
<dbReference type="PIRSF" id="PIRSF029143">
    <property type="entry name" value="UCP029143"/>
    <property type="match status" value="1"/>
</dbReference>
<dbReference type="SMART" id="SM01022">
    <property type="entry name" value="ASCH"/>
    <property type="match status" value="1"/>
</dbReference>
<dbReference type="SUPFAM" id="SSF88697">
    <property type="entry name" value="PUA domain-like"/>
    <property type="match status" value="1"/>
</dbReference>
<sequence>MQPNDITFFQRFQNDILAGRKTITIRDASESHFKAGDVLRVGRFEDDGYFCTIEVTGTSTVTLDTLNEKHAQQENMSLDELKRVIAEIYPNQTQFYVIDFKCL</sequence>
<name>AC4CH_SALPK</name>
<keyword id="KW-0378">Hydrolase</keyword>
<protein>
    <recommendedName>
        <fullName evidence="2">N(4)-acetylcytidine amidohydrolase</fullName>
        <shortName evidence="2">ac4C amidohydrolase</shortName>
        <ecNumber evidence="2">3.5.1.135</ecNumber>
    </recommendedName>
</protein>
<comment type="function">
    <text evidence="2">Catalyzes the hydrolysis of N(4)-acetylcytidine (ac4C).</text>
</comment>
<comment type="catalytic activity">
    <reaction evidence="2">
        <text>N(4)-acetylcytidine + H2O = cytidine + acetate + H(+)</text>
        <dbReference type="Rhea" id="RHEA:62932"/>
        <dbReference type="ChEBI" id="CHEBI:15377"/>
        <dbReference type="ChEBI" id="CHEBI:15378"/>
        <dbReference type="ChEBI" id="CHEBI:17562"/>
        <dbReference type="ChEBI" id="CHEBI:30089"/>
        <dbReference type="ChEBI" id="CHEBI:70989"/>
        <dbReference type="EC" id="3.5.1.135"/>
    </reaction>
</comment>
<comment type="catalytic activity">
    <reaction evidence="2">
        <text>N(4)-acetyl-2'-deoxycytidine + H2O = 2'-deoxycytidine + acetate + H(+)</text>
        <dbReference type="Rhea" id="RHEA:62936"/>
        <dbReference type="ChEBI" id="CHEBI:15377"/>
        <dbReference type="ChEBI" id="CHEBI:15378"/>
        <dbReference type="ChEBI" id="CHEBI:15698"/>
        <dbReference type="ChEBI" id="CHEBI:30089"/>
        <dbReference type="ChEBI" id="CHEBI:146133"/>
        <dbReference type="EC" id="3.5.1.135"/>
    </reaction>
</comment>
<comment type="catalytic activity">
    <reaction evidence="2">
        <text>N(4)-acetylcytosine + H2O = cytosine + acetate + H(+)</text>
        <dbReference type="Rhea" id="RHEA:62940"/>
        <dbReference type="ChEBI" id="CHEBI:15377"/>
        <dbReference type="ChEBI" id="CHEBI:15378"/>
        <dbReference type="ChEBI" id="CHEBI:16040"/>
        <dbReference type="ChEBI" id="CHEBI:30089"/>
        <dbReference type="ChEBI" id="CHEBI:146134"/>
        <dbReference type="EC" id="3.5.1.135"/>
    </reaction>
</comment>
<comment type="similarity">
    <text evidence="2">Belongs to the N(4)-acetylcytidine amidohydrolase family.</text>
</comment>
<reference key="1">
    <citation type="journal article" date="2009" name="BMC Genomics">
        <title>Pseudogene accumulation in the evolutionary histories of Salmonella enterica serovars Paratyphi A and Typhi.</title>
        <authorList>
            <person name="Holt K.E."/>
            <person name="Thomson N.R."/>
            <person name="Wain J."/>
            <person name="Langridge G.C."/>
            <person name="Hasan R."/>
            <person name="Bhutta Z.A."/>
            <person name="Quail M.A."/>
            <person name="Norbertczak H."/>
            <person name="Walker D."/>
            <person name="Simmonds M."/>
            <person name="White B."/>
            <person name="Bason N."/>
            <person name="Mungall K."/>
            <person name="Dougan G."/>
            <person name="Parkhill J."/>
        </authorList>
    </citation>
    <scope>NUCLEOTIDE SEQUENCE [LARGE SCALE GENOMIC DNA]</scope>
    <source>
        <strain>AKU_12601</strain>
    </source>
</reference>
<gene>
    <name type="primary">yqfB</name>
    <name type="ordered locus">SSPA2720</name>
</gene>
<accession>B5BFL5</accession>
<proteinExistence type="inferred from homology"/>
<feature type="chain" id="PRO_1000131798" description="N(4)-acetylcytidine amidohydrolase">
    <location>
        <begin position="1"/>
        <end position="103"/>
    </location>
</feature>
<feature type="domain" description="ASCH" evidence="1">
    <location>
        <begin position="6"/>
        <end position="94"/>
    </location>
</feature>
<feature type="active site" description="Proton acceptor" evidence="2">
    <location>
        <position position="21"/>
    </location>
</feature>
<feature type="active site" description="Nucleophile" evidence="2">
    <location>
        <position position="24"/>
    </location>
</feature>
<feature type="active site" description="Proton donor" evidence="2">
    <location>
        <position position="74"/>
    </location>
</feature>
<organism>
    <name type="scientific">Salmonella paratyphi A (strain AKU_12601)</name>
    <dbReference type="NCBI Taxonomy" id="554290"/>
    <lineage>
        <taxon>Bacteria</taxon>
        <taxon>Pseudomonadati</taxon>
        <taxon>Pseudomonadota</taxon>
        <taxon>Gammaproteobacteria</taxon>
        <taxon>Enterobacterales</taxon>
        <taxon>Enterobacteriaceae</taxon>
        <taxon>Salmonella</taxon>
    </lineage>
</organism>